<reference key="1">
    <citation type="submission" date="2008-02" db="EMBL/GenBank/DDBJ databases">
        <title>Complete sequence of chromosome of Methylobacterium sp. 4-46.</title>
        <authorList>
            <consortium name="US DOE Joint Genome Institute"/>
            <person name="Copeland A."/>
            <person name="Lucas S."/>
            <person name="Lapidus A."/>
            <person name="Glavina del Rio T."/>
            <person name="Dalin E."/>
            <person name="Tice H."/>
            <person name="Bruce D."/>
            <person name="Goodwin L."/>
            <person name="Pitluck S."/>
            <person name="Chertkov O."/>
            <person name="Brettin T."/>
            <person name="Detter J.C."/>
            <person name="Han C."/>
            <person name="Kuske C.R."/>
            <person name="Schmutz J."/>
            <person name="Larimer F."/>
            <person name="Land M."/>
            <person name="Hauser L."/>
            <person name="Kyrpides N."/>
            <person name="Ivanova N."/>
            <person name="Marx C.J."/>
            <person name="Richardson P."/>
        </authorList>
    </citation>
    <scope>NUCLEOTIDE SEQUENCE [LARGE SCALE GENOMIC DNA]</scope>
    <source>
        <strain>4-46</strain>
    </source>
</reference>
<keyword id="KW-0997">Cell inner membrane</keyword>
<keyword id="KW-1003">Cell membrane</keyword>
<keyword id="KW-0201">Cytochrome c-type biogenesis</keyword>
<keyword id="KW-0349">Heme</keyword>
<keyword id="KW-0408">Iron</keyword>
<keyword id="KW-0472">Membrane</keyword>
<keyword id="KW-0479">Metal-binding</keyword>
<keyword id="KW-0735">Signal-anchor</keyword>
<keyword id="KW-0812">Transmembrane</keyword>
<keyword id="KW-1133">Transmembrane helix</keyword>
<accession>B0UMU6</accession>
<organism>
    <name type="scientific">Methylobacterium sp. (strain 4-46)</name>
    <dbReference type="NCBI Taxonomy" id="426117"/>
    <lineage>
        <taxon>Bacteria</taxon>
        <taxon>Pseudomonadati</taxon>
        <taxon>Pseudomonadota</taxon>
        <taxon>Alphaproteobacteria</taxon>
        <taxon>Hyphomicrobiales</taxon>
        <taxon>Methylobacteriaceae</taxon>
        <taxon>Methylobacterium</taxon>
    </lineage>
</organism>
<dbReference type="EMBL" id="CP000943">
    <property type="protein sequence ID" value="ACA18774.1"/>
    <property type="molecule type" value="Genomic_DNA"/>
</dbReference>
<dbReference type="SMR" id="B0UMU6"/>
<dbReference type="STRING" id="426117.M446_4432"/>
<dbReference type="KEGG" id="met:M446_4432"/>
<dbReference type="eggNOG" id="COG2332">
    <property type="taxonomic scope" value="Bacteria"/>
</dbReference>
<dbReference type="HOGENOM" id="CLU_079503_1_1_5"/>
<dbReference type="GO" id="GO:0005886">
    <property type="term" value="C:plasma membrane"/>
    <property type="evidence" value="ECO:0007669"/>
    <property type="project" value="UniProtKB-SubCell"/>
</dbReference>
<dbReference type="GO" id="GO:0020037">
    <property type="term" value="F:heme binding"/>
    <property type="evidence" value="ECO:0007669"/>
    <property type="project" value="InterPro"/>
</dbReference>
<dbReference type="GO" id="GO:0046872">
    <property type="term" value="F:metal ion binding"/>
    <property type="evidence" value="ECO:0007669"/>
    <property type="project" value="UniProtKB-KW"/>
</dbReference>
<dbReference type="GO" id="GO:0017004">
    <property type="term" value="P:cytochrome complex assembly"/>
    <property type="evidence" value="ECO:0007669"/>
    <property type="project" value="UniProtKB-KW"/>
</dbReference>
<dbReference type="FunFam" id="2.40.50.140:FF:000104">
    <property type="entry name" value="Cytochrome c-type biogenesis protein CcmE"/>
    <property type="match status" value="1"/>
</dbReference>
<dbReference type="Gene3D" id="2.40.50.140">
    <property type="entry name" value="Nucleic acid-binding proteins"/>
    <property type="match status" value="1"/>
</dbReference>
<dbReference type="HAMAP" id="MF_01959">
    <property type="entry name" value="CcmE"/>
    <property type="match status" value="1"/>
</dbReference>
<dbReference type="InterPro" id="IPR004329">
    <property type="entry name" value="CcmE"/>
</dbReference>
<dbReference type="InterPro" id="IPR036127">
    <property type="entry name" value="CcmE-like_sf"/>
</dbReference>
<dbReference type="InterPro" id="IPR012340">
    <property type="entry name" value="NA-bd_OB-fold"/>
</dbReference>
<dbReference type="NCBIfam" id="NF009727">
    <property type="entry name" value="PRK13254.1-1"/>
    <property type="match status" value="1"/>
</dbReference>
<dbReference type="NCBIfam" id="NF009731">
    <property type="entry name" value="PRK13254.1-5"/>
    <property type="match status" value="1"/>
</dbReference>
<dbReference type="PANTHER" id="PTHR34128">
    <property type="entry name" value="CYTOCHROME C-TYPE BIOGENESIS PROTEIN CCME HOMOLOG, MITOCHONDRIAL"/>
    <property type="match status" value="1"/>
</dbReference>
<dbReference type="PANTHER" id="PTHR34128:SF2">
    <property type="entry name" value="CYTOCHROME C-TYPE BIOGENESIS PROTEIN CCME HOMOLOG, MITOCHONDRIAL"/>
    <property type="match status" value="1"/>
</dbReference>
<dbReference type="Pfam" id="PF03100">
    <property type="entry name" value="CcmE"/>
    <property type="match status" value="1"/>
</dbReference>
<dbReference type="SUPFAM" id="SSF82093">
    <property type="entry name" value="Heme chaperone CcmE"/>
    <property type="match status" value="1"/>
</dbReference>
<comment type="function">
    <text evidence="1">Heme chaperone required for the biogenesis of c-type cytochromes. Transiently binds heme delivered by CcmC and transfers the heme to apo-cytochromes in a process facilitated by CcmF and CcmH.</text>
</comment>
<comment type="subcellular location">
    <subcellularLocation>
        <location evidence="1">Cell inner membrane</location>
        <topology evidence="1">Single-pass type II membrane protein</topology>
        <orientation evidence="1">Periplasmic side</orientation>
    </subcellularLocation>
</comment>
<comment type="similarity">
    <text evidence="1">Belongs to the CcmE/CycJ family.</text>
</comment>
<sequence length="163" mass="17323">MTRKQRRLVFIGTCGAVLAVALGLVLWAMSGTIVFFRSPSEIAREAVAPGVRFRLGGLVEAGSVVRGPDSQVTFAVTDNAARLPVRYRGLLPDLFREGQGVVAEGAMEPGGVFRADTVLAKHDETYMPREVADALKKSGRWQEGAGHPAPAPPRTASGEARAP</sequence>
<protein>
    <recommendedName>
        <fullName evidence="1">Cytochrome c-type biogenesis protein CcmE</fullName>
    </recommendedName>
    <alternativeName>
        <fullName evidence="1">Cytochrome c maturation protein E</fullName>
    </alternativeName>
    <alternativeName>
        <fullName evidence="1">Heme chaperone CcmE</fullName>
    </alternativeName>
</protein>
<proteinExistence type="inferred from homology"/>
<gene>
    <name evidence="1" type="primary">ccmE</name>
    <name evidence="1" type="synonym">cycJ</name>
    <name type="ordered locus">M446_4432</name>
</gene>
<name>CCME_METS4</name>
<feature type="chain" id="PRO_1000189036" description="Cytochrome c-type biogenesis protein CcmE">
    <location>
        <begin position="1"/>
        <end position="163"/>
    </location>
</feature>
<feature type="topological domain" description="Cytoplasmic" evidence="1">
    <location>
        <begin position="1"/>
        <end position="7"/>
    </location>
</feature>
<feature type="transmembrane region" description="Helical; Signal-anchor for type II membrane protein" evidence="1">
    <location>
        <begin position="8"/>
        <end position="28"/>
    </location>
</feature>
<feature type="topological domain" description="Periplasmic" evidence="1">
    <location>
        <begin position="29"/>
        <end position="163"/>
    </location>
</feature>
<feature type="region of interest" description="Disordered" evidence="2">
    <location>
        <begin position="134"/>
        <end position="163"/>
    </location>
</feature>
<feature type="binding site" description="covalent" evidence="1">
    <location>
        <position position="122"/>
    </location>
    <ligand>
        <name>heme</name>
        <dbReference type="ChEBI" id="CHEBI:30413"/>
    </ligand>
</feature>
<feature type="binding site" description="axial binding residue" evidence="1">
    <location>
        <position position="126"/>
    </location>
    <ligand>
        <name>heme</name>
        <dbReference type="ChEBI" id="CHEBI:30413"/>
    </ligand>
    <ligandPart>
        <name>Fe</name>
        <dbReference type="ChEBI" id="CHEBI:18248"/>
    </ligandPart>
</feature>
<evidence type="ECO:0000255" key="1">
    <source>
        <dbReference type="HAMAP-Rule" id="MF_01959"/>
    </source>
</evidence>
<evidence type="ECO:0000256" key="2">
    <source>
        <dbReference type="SAM" id="MobiDB-lite"/>
    </source>
</evidence>